<proteinExistence type="inferred from homology"/>
<dbReference type="EMBL" id="U00096">
    <property type="protein sequence ID" value="AAC74160.1"/>
    <property type="molecule type" value="Genomic_DNA"/>
</dbReference>
<dbReference type="EMBL" id="AP009048">
    <property type="protein sequence ID" value="BAA35885.2"/>
    <property type="molecule type" value="Genomic_DNA"/>
</dbReference>
<dbReference type="PIR" id="A64851">
    <property type="entry name" value="A64851"/>
</dbReference>
<dbReference type="RefSeq" id="NP_415594.1">
    <property type="nucleotide sequence ID" value="NC_000913.3"/>
</dbReference>
<dbReference type="RefSeq" id="WP_000885873.1">
    <property type="nucleotide sequence ID" value="NZ_SSZK01000053.1"/>
</dbReference>
<dbReference type="SMR" id="P75937"/>
<dbReference type="BioGRID" id="4260074">
    <property type="interactions" value="11"/>
</dbReference>
<dbReference type="FunCoup" id="P75937">
    <property type="interactions" value="197"/>
</dbReference>
<dbReference type="IntAct" id="P75937">
    <property type="interactions" value="3"/>
</dbReference>
<dbReference type="STRING" id="511145.b1076"/>
<dbReference type="PaxDb" id="511145-b1076"/>
<dbReference type="EnsemblBacteria" id="AAC74160">
    <property type="protein sequence ID" value="AAC74160"/>
    <property type="gene ID" value="b1076"/>
</dbReference>
<dbReference type="GeneID" id="945636"/>
<dbReference type="KEGG" id="ecj:JW1063"/>
<dbReference type="KEGG" id="eco:b1076"/>
<dbReference type="KEGG" id="ecoc:C3026_06525"/>
<dbReference type="PATRIC" id="fig|1411691.4.peg.1192"/>
<dbReference type="EchoBASE" id="EB4017"/>
<dbReference type="eggNOG" id="COG1749">
    <property type="taxonomic scope" value="Bacteria"/>
</dbReference>
<dbReference type="InParanoid" id="P75937"/>
<dbReference type="OMA" id="QTRMDVV"/>
<dbReference type="OrthoDB" id="8578401at2"/>
<dbReference type="PhylomeDB" id="P75937"/>
<dbReference type="BioCyc" id="EcoCyc:G361-MONOMER"/>
<dbReference type="PRO" id="PR:P75937"/>
<dbReference type="Proteomes" id="UP000000625">
    <property type="component" value="Chromosome"/>
</dbReference>
<dbReference type="GO" id="GO:0009288">
    <property type="term" value="C:bacterial-type flagellum"/>
    <property type="evidence" value="ECO:0000318"/>
    <property type="project" value="GO_Central"/>
</dbReference>
<dbReference type="GO" id="GO:0009425">
    <property type="term" value="C:bacterial-type flagellum basal body"/>
    <property type="evidence" value="ECO:0007669"/>
    <property type="project" value="UniProtKB-SubCell"/>
</dbReference>
<dbReference type="GO" id="GO:0009424">
    <property type="term" value="C:bacterial-type flagellum hook"/>
    <property type="evidence" value="ECO:0000315"/>
    <property type="project" value="EcoliWiki"/>
</dbReference>
<dbReference type="GO" id="GO:0005829">
    <property type="term" value="C:cytosol"/>
    <property type="evidence" value="ECO:0000314"/>
    <property type="project" value="EcoCyc"/>
</dbReference>
<dbReference type="GO" id="GO:0071978">
    <property type="term" value="P:bacterial-type flagellum-dependent swarming motility"/>
    <property type="evidence" value="ECO:0000318"/>
    <property type="project" value="GO_Central"/>
</dbReference>
<dbReference type="Gene3D" id="2.60.98.20">
    <property type="entry name" value="Flagellar hook protein FlgE"/>
    <property type="match status" value="1"/>
</dbReference>
<dbReference type="InterPro" id="IPR037058">
    <property type="entry name" value="Falgellar_hook_FlgE_sf"/>
</dbReference>
<dbReference type="InterPro" id="IPR001444">
    <property type="entry name" value="Flag_bb_rod_N"/>
</dbReference>
<dbReference type="InterPro" id="IPR019776">
    <property type="entry name" value="Flagellar_basal_body_rod_CS"/>
</dbReference>
<dbReference type="InterPro" id="IPR020013">
    <property type="entry name" value="Flagellar_FlgE/F/G"/>
</dbReference>
<dbReference type="InterPro" id="IPR010930">
    <property type="entry name" value="Flg_bb/hook_C_dom"/>
</dbReference>
<dbReference type="InterPro" id="IPR037925">
    <property type="entry name" value="FlgE/F/G-like"/>
</dbReference>
<dbReference type="InterPro" id="IPR011491">
    <property type="entry name" value="FlgE_D2"/>
</dbReference>
<dbReference type="InterPro" id="IPR053967">
    <property type="entry name" value="LlgE_F_G-like_D1"/>
</dbReference>
<dbReference type="NCBIfam" id="TIGR03506">
    <property type="entry name" value="FlgEFG_subfam"/>
    <property type="match status" value="1"/>
</dbReference>
<dbReference type="NCBIfam" id="NF004238">
    <property type="entry name" value="PRK05682.1-1"/>
    <property type="match status" value="1"/>
</dbReference>
<dbReference type="PANTHER" id="PTHR30435:SF1">
    <property type="entry name" value="FLAGELLAR HOOK PROTEIN FLGE"/>
    <property type="match status" value="1"/>
</dbReference>
<dbReference type="PANTHER" id="PTHR30435">
    <property type="entry name" value="FLAGELLAR PROTEIN"/>
    <property type="match status" value="1"/>
</dbReference>
<dbReference type="Pfam" id="PF00460">
    <property type="entry name" value="Flg_bb_rod"/>
    <property type="match status" value="1"/>
</dbReference>
<dbReference type="Pfam" id="PF06429">
    <property type="entry name" value="Flg_bbr_C"/>
    <property type="match status" value="1"/>
</dbReference>
<dbReference type="Pfam" id="PF07559">
    <property type="entry name" value="FlgE_D2"/>
    <property type="match status" value="1"/>
</dbReference>
<dbReference type="Pfam" id="PF22692">
    <property type="entry name" value="LlgE_F_G_D1"/>
    <property type="match status" value="1"/>
</dbReference>
<dbReference type="SUPFAM" id="SSF117143">
    <property type="entry name" value="Flagellar hook protein flgE"/>
    <property type="match status" value="1"/>
</dbReference>
<dbReference type="PROSITE" id="PS00588">
    <property type="entry name" value="FLAGELLA_BB_ROD"/>
    <property type="match status" value="1"/>
</dbReference>
<sequence length="402" mass="42045">MAFSQAVSGLNAAATNLDVIGNNIANSATYGFKSGTASFADMFAGSKVGLGVKVAGITQDFTDGTTTNTGRGLDVAISQNGFFRLVDSNGSVFYSRNGQFKLDENRNLVNMQGLQLTGYPATGTPPTIQQGANPTNISIPNTLMAAKTTTTASMQINLNSSDPLPTVTPFSASNADSYNKKGSVTVFDSQGNAHDMSVYFVKTGDNNWQVYTQDSSDPNSIAKTATTLEFNANGTLVDGAMANNIATGAINGAEPATFSLSFLNSMQQNTGANNIVATTQNGYKPGDLVSYQINDDGTVVGNYSNEQTQLLGQIVLANFANNEGLASEGDNVWSATQSSGVALLGTAGTGNFGTLTNGALEASNVDLSKELVNMIVAQRNYQSNAQTIKTQDQILNTLVNLR</sequence>
<name>FLGE_ECOLI</name>
<comment type="subcellular location">
    <subcellularLocation>
        <location evidence="1">Bacterial flagellum basal body</location>
    </subcellularLocation>
</comment>
<comment type="similarity">
    <text evidence="2">Belongs to the flagella basal body rod proteins family.</text>
</comment>
<accession>P75937</accession>
<accession>Q9R7P1</accession>
<keyword id="KW-0975">Bacterial flagellum</keyword>
<keyword id="KW-1185">Reference proteome</keyword>
<evidence type="ECO:0000250" key="1"/>
<evidence type="ECO:0000305" key="2"/>
<feature type="initiator methionine" description="Removed" evidence="1">
    <location>
        <position position="1"/>
    </location>
</feature>
<feature type="chain" id="PRO_0000180825" description="Flagellar hook protein FlgE">
    <location>
        <begin position="2"/>
        <end position="402"/>
    </location>
</feature>
<organism>
    <name type="scientific">Escherichia coli (strain K12)</name>
    <dbReference type="NCBI Taxonomy" id="83333"/>
    <lineage>
        <taxon>Bacteria</taxon>
        <taxon>Pseudomonadati</taxon>
        <taxon>Pseudomonadota</taxon>
        <taxon>Gammaproteobacteria</taxon>
        <taxon>Enterobacterales</taxon>
        <taxon>Enterobacteriaceae</taxon>
        <taxon>Escherichia</taxon>
    </lineage>
</organism>
<reference key="1">
    <citation type="journal article" date="1996" name="DNA Res.">
        <title>A 718-kb DNA sequence of the Escherichia coli K-12 genome corresponding to the 12.7-28.0 min region on the linkage map.</title>
        <authorList>
            <person name="Oshima T."/>
            <person name="Aiba H."/>
            <person name="Baba T."/>
            <person name="Fujita K."/>
            <person name="Hayashi K."/>
            <person name="Honjo A."/>
            <person name="Ikemoto K."/>
            <person name="Inada T."/>
            <person name="Itoh T."/>
            <person name="Kajihara M."/>
            <person name="Kanai K."/>
            <person name="Kashimoto K."/>
            <person name="Kimura S."/>
            <person name="Kitagawa M."/>
            <person name="Makino K."/>
            <person name="Masuda S."/>
            <person name="Miki T."/>
            <person name="Mizobuchi K."/>
            <person name="Mori H."/>
            <person name="Motomura K."/>
            <person name="Nakamura Y."/>
            <person name="Nashimoto H."/>
            <person name="Nishio Y."/>
            <person name="Saito N."/>
            <person name="Sampei G."/>
            <person name="Seki Y."/>
            <person name="Tagami H."/>
            <person name="Takemoto K."/>
            <person name="Wada C."/>
            <person name="Yamamoto Y."/>
            <person name="Yano M."/>
            <person name="Horiuchi T."/>
        </authorList>
    </citation>
    <scope>NUCLEOTIDE SEQUENCE [LARGE SCALE GENOMIC DNA]</scope>
    <source>
        <strain>K12 / W3110 / ATCC 27325 / DSM 5911</strain>
    </source>
</reference>
<reference key="2">
    <citation type="journal article" date="1997" name="Science">
        <title>The complete genome sequence of Escherichia coli K-12.</title>
        <authorList>
            <person name="Blattner F.R."/>
            <person name="Plunkett G. III"/>
            <person name="Bloch C.A."/>
            <person name="Perna N.T."/>
            <person name="Burland V."/>
            <person name="Riley M."/>
            <person name="Collado-Vides J."/>
            <person name="Glasner J.D."/>
            <person name="Rode C.K."/>
            <person name="Mayhew G.F."/>
            <person name="Gregor J."/>
            <person name="Davis N.W."/>
            <person name="Kirkpatrick H.A."/>
            <person name="Goeden M.A."/>
            <person name="Rose D.J."/>
            <person name="Mau B."/>
            <person name="Shao Y."/>
        </authorList>
    </citation>
    <scope>NUCLEOTIDE SEQUENCE [LARGE SCALE GENOMIC DNA]</scope>
    <source>
        <strain>K12 / MG1655 / ATCC 47076</strain>
    </source>
</reference>
<reference key="3">
    <citation type="journal article" date="2006" name="Mol. Syst. Biol.">
        <title>Highly accurate genome sequences of Escherichia coli K-12 strains MG1655 and W3110.</title>
        <authorList>
            <person name="Hayashi K."/>
            <person name="Morooka N."/>
            <person name="Yamamoto Y."/>
            <person name="Fujita K."/>
            <person name="Isono K."/>
            <person name="Choi S."/>
            <person name="Ohtsubo E."/>
            <person name="Baba T."/>
            <person name="Wanner B.L."/>
            <person name="Mori H."/>
            <person name="Horiuchi T."/>
        </authorList>
    </citation>
    <scope>NUCLEOTIDE SEQUENCE [LARGE SCALE GENOMIC DNA]</scope>
    <source>
        <strain>K12 / W3110 / ATCC 27325 / DSM 5911</strain>
    </source>
</reference>
<gene>
    <name type="primary">flgE</name>
    <name type="synonym">fla FV</name>
    <name type="synonym">flaK</name>
    <name type="ordered locus">b1076</name>
    <name type="ordered locus">JW1063</name>
</gene>
<protein>
    <recommendedName>
        <fullName>Flagellar hook protein FlgE</fullName>
    </recommendedName>
</protein>